<name>MALT_YERPE</name>
<keyword id="KW-0010">Activator</keyword>
<keyword id="KW-0067">ATP-binding</keyword>
<keyword id="KW-0119">Carbohydrate metabolism</keyword>
<keyword id="KW-0238">DNA-binding</keyword>
<keyword id="KW-0547">Nucleotide-binding</keyword>
<keyword id="KW-1185">Reference proteome</keyword>
<keyword id="KW-0804">Transcription</keyword>
<keyword id="KW-0805">Transcription regulation</keyword>
<gene>
    <name evidence="1" type="primary">malT</name>
    <name type="ordered locus">YPO0123</name>
    <name type="ordered locus">y3900</name>
    <name type="ordered locus">YP_0125</name>
</gene>
<sequence>MLIPSKLSRPVRLQNTVVRDRLLVKLSSAANYRLTLINCPAGYGKTTLIAQWAADQSNLGWYSLDESDNQSERFATYLIAAIQLATGGHCSKSEALSQKHQYANLSALFSQLFIELSNWDGPLYLVIDDYHLITNDAIHEAMRFFLRHQPENLTLIILSRTLPSLGIANLRVRDQLLELGMQQLAFNHHEAQQFFECRLSSPLEQGDSSRLCDEVEGWVTALQLIALSSRQPNSSAQKSAKRLAGLNASHLSDYLVDEVLDQVDSKARAFLLRCSVLRSMNDALIVRLTGEDNGQQLLEELERQGLFIHRMDDSAEWFCFHPLFATFLRQRCQWELALELPELHHAAAEGWMALGYPAEAIHHALAAGDVGMLRDILLQHAWSLFHHSELALLEQCLTALPYPLLVQNPELALLQAWLAQSQHRYSEVNTLLEQAELAMQERKIPVDEILRAEFGALRAQVAINAGKPDEAEKLATDALKYLPMAHYYSRIVATSVTGEVHHCKGELARALPMMQQTEQMARRHEAYHYALWALLQQSEILIAQGFLQAAYETQEKAFELIREQHLEQLPMHEFLLRIRSQVLWSWSRLDEAEEAARKGVEILANYQPQQQLQCLAMLAKCSLARGDLDNANVYIQRCEALQHGSQYHLDWITNADKPRVIHWQMTGDKVAAASWLRQTEKPGMADNHFLQGQWRNIARVQIILGRFDEAEVVLDELNENARRLRLTSDLNRNLLLSNTLYWQTERKGEAQKALIESLTLANRTGFISHFVIEGEAMAQQLRQLIQLNALPELEQHRAQRILKDINQHHRHKFAHFDEIFVDKLLTHPQVPELIRTSPLTQREWQVLGLIYSGYSNDQIANELDVAATTIKTHIRNLYQKLGVAHRQEAVQQAQRLLQMMGYV</sequence>
<reference key="1">
    <citation type="journal article" date="2001" name="Nature">
        <title>Genome sequence of Yersinia pestis, the causative agent of plague.</title>
        <authorList>
            <person name="Parkhill J."/>
            <person name="Wren B.W."/>
            <person name="Thomson N.R."/>
            <person name="Titball R.W."/>
            <person name="Holden M.T.G."/>
            <person name="Prentice M.B."/>
            <person name="Sebaihia M."/>
            <person name="James K.D."/>
            <person name="Churcher C.M."/>
            <person name="Mungall K.L."/>
            <person name="Baker S."/>
            <person name="Basham D."/>
            <person name="Bentley S.D."/>
            <person name="Brooks K."/>
            <person name="Cerdeno-Tarraga A.-M."/>
            <person name="Chillingworth T."/>
            <person name="Cronin A."/>
            <person name="Davies R.M."/>
            <person name="Davis P."/>
            <person name="Dougan G."/>
            <person name="Feltwell T."/>
            <person name="Hamlin N."/>
            <person name="Holroyd S."/>
            <person name="Jagels K."/>
            <person name="Karlyshev A.V."/>
            <person name="Leather S."/>
            <person name="Moule S."/>
            <person name="Oyston P.C.F."/>
            <person name="Quail M.A."/>
            <person name="Rutherford K.M."/>
            <person name="Simmonds M."/>
            <person name="Skelton J."/>
            <person name="Stevens K."/>
            <person name="Whitehead S."/>
            <person name="Barrell B.G."/>
        </authorList>
    </citation>
    <scope>NUCLEOTIDE SEQUENCE [LARGE SCALE GENOMIC DNA]</scope>
    <source>
        <strain>CO-92 / Biovar Orientalis</strain>
    </source>
</reference>
<reference key="2">
    <citation type="journal article" date="2002" name="J. Bacteriol.">
        <title>Genome sequence of Yersinia pestis KIM.</title>
        <authorList>
            <person name="Deng W."/>
            <person name="Burland V."/>
            <person name="Plunkett G. III"/>
            <person name="Boutin A."/>
            <person name="Mayhew G.F."/>
            <person name="Liss P."/>
            <person name="Perna N.T."/>
            <person name="Rose D.J."/>
            <person name="Mau B."/>
            <person name="Zhou S."/>
            <person name="Schwartz D.C."/>
            <person name="Fetherston J.D."/>
            <person name="Lindler L.E."/>
            <person name="Brubaker R.R."/>
            <person name="Plano G.V."/>
            <person name="Straley S.C."/>
            <person name="McDonough K.A."/>
            <person name="Nilles M.L."/>
            <person name="Matson J.S."/>
            <person name="Blattner F.R."/>
            <person name="Perry R.D."/>
        </authorList>
    </citation>
    <scope>NUCLEOTIDE SEQUENCE [LARGE SCALE GENOMIC DNA]</scope>
    <source>
        <strain>KIM10+ / Biovar Mediaevalis</strain>
    </source>
</reference>
<reference key="3">
    <citation type="journal article" date="2004" name="DNA Res.">
        <title>Complete genome sequence of Yersinia pestis strain 91001, an isolate avirulent to humans.</title>
        <authorList>
            <person name="Song Y."/>
            <person name="Tong Z."/>
            <person name="Wang J."/>
            <person name="Wang L."/>
            <person name="Guo Z."/>
            <person name="Han Y."/>
            <person name="Zhang J."/>
            <person name="Pei D."/>
            <person name="Zhou D."/>
            <person name="Qin H."/>
            <person name="Pang X."/>
            <person name="Han Y."/>
            <person name="Zhai J."/>
            <person name="Li M."/>
            <person name="Cui B."/>
            <person name="Qi Z."/>
            <person name="Jin L."/>
            <person name="Dai R."/>
            <person name="Chen F."/>
            <person name="Li S."/>
            <person name="Ye C."/>
            <person name="Du Z."/>
            <person name="Lin W."/>
            <person name="Wang J."/>
            <person name="Yu J."/>
            <person name="Yang H."/>
            <person name="Wang J."/>
            <person name="Huang P."/>
            <person name="Yang R."/>
        </authorList>
    </citation>
    <scope>NUCLEOTIDE SEQUENCE [LARGE SCALE GENOMIC DNA]</scope>
    <source>
        <strain>91001 / Biovar Mediaevalis</strain>
    </source>
</reference>
<protein>
    <recommendedName>
        <fullName evidence="1">HTH-type transcriptional regulator MalT</fullName>
    </recommendedName>
    <alternativeName>
        <fullName evidence="1">ATP-dependent transcriptional activator MalT</fullName>
    </alternativeName>
</protein>
<comment type="function">
    <text evidence="1">Positively regulates the transcription of the maltose regulon whose gene products are responsible for uptake and catabolism of malto-oligosaccharides. Specifically binds to the promoter region of its target genes, recognizing a short DNA motif called the MalT box.</text>
</comment>
<comment type="activity regulation">
    <text evidence="1">Activated by ATP and maltotriose, which are both required for DNA binding.</text>
</comment>
<comment type="subunit">
    <text evidence="1">Monomer in solution. Oligomerizes to an active state in the presence of the positive effectors ATP and maltotriose.</text>
</comment>
<comment type="similarity">
    <text evidence="1">Belongs to the MalT family.</text>
</comment>
<organism>
    <name type="scientific">Yersinia pestis</name>
    <dbReference type="NCBI Taxonomy" id="632"/>
    <lineage>
        <taxon>Bacteria</taxon>
        <taxon>Pseudomonadati</taxon>
        <taxon>Pseudomonadota</taxon>
        <taxon>Gammaproteobacteria</taxon>
        <taxon>Enterobacterales</taxon>
        <taxon>Yersiniaceae</taxon>
        <taxon>Yersinia</taxon>
    </lineage>
</organism>
<dbReference type="EMBL" id="AL590842">
    <property type="protein sequence ID" value="CAL18810.1"/>
    <property type="molecule type" value="Genomic_DNA"/>
</dbReference>
<dbReference type="EMBL" id="AE009952">
    <property type="protein sequence ID" value="AAM87445.1"/>
    <property type="molecule type" value="Genomic_DNA"/>
</dbReference>
<dbReference type="EMBL" id="AE017042">
    <property type="protein sequence ID" value="AAS60404.1"/>
    <property type="molecule type" value="Genomic_DNA"/>
</dbReference>
<dbReference type="PIR" id="AI0015">
    <property type="entry name" value="AI0015"/>
</dbReference>
<dbReference type="RefSeq" id="WP_002208926.1">
    <property type="nucleotide sequence ID" value="NZ_WUCM01000004.1"/>
</dbReference>
<dbReference type="RefSeq" id="YP_002345211.1">
    <property type="nucleotide sequence ID" value="NC_003143.1"/>
</dbReference>
<dbReference type="SMR" id="Q8ZJI2"/>
<dbReference type="IntAct" id="Q8ZJI2">
    <property type="interactions" value="2"/>
</dbReference>
<dbReference type="STRING" id="214092.YPO0123"/>
<dbReference type="PaxDb" id="214092-YPO0123"/>
<dbReference type="DNASU" id="1148847"/>
<dbReference type="EnsemblBacteria" id="AAS60404">
    <property type="protein sequence ID" value="AAS60404"/>
    <property type="gene ID" value="YP_0125"/>
</dbReference>
<dbReference type="GeneID" id="57974475"/>
<dbReference type="KEGG" id="ype:YPO0123"/>
<dbReference type="KEGG" id="ypk:y3900"/>
<dbReference type="KEGG" id="ypm:YP_0125"/>
<dbReference type="PATRIC" id="fig|214092.21.peg.349"/>
<dbReference type="eggNOG" id="COG2909">
    <property type="taxonomic scope" value="Bacteria"/>
</dbReference>
<dbReference type="HOGENOM" id="CLU_006325_3_0_6"/>
<dbReference type="OMA" id="SDWVSNA"/>
<dbReference type="OrthoDB" id="1123107at2"/>
<dbReference type="Proteomes" id="UP000000815">
    <property type="component" value="Chromosome"/>
</dbReference>
<dbReference type="Proteomes" id="UP000001019">
    <property type="component" value="Chromosome"/>
</dbReference>
<dbReference type="Proteomes" id="UP000002490">
    <property type="component" value="Chromosome"/>
</dbReference>
<dbReference type="GO" id="GO:0005524">
    <property type="term" value="F:ATP binding"/>
    <property type="evidence" value="ECO:0007669"/>
    <property type="project" value="UniProtKB-UniRule"/>
</dbReference>
<dbReference type="GO" id="GO:0003677">
    <property type="term" value="F:DNA binding"/>
    <property type="evidence" value="ECO:0007669"/>
    <property type="project" value="UniProtKB-KW"/>
</dbReference>
<dbReference type="GO" id="GO:0003700">
    <property type="term" value="F:DNA-binding transcription factor activity"/>
    <property type="evidence" value="ECO:0007669"/>
    <property type="project" value="UniProtKB-UniRule"/>
</dbReference>
<dbReference type="GO" id="GO:0045913">
    <property type="term" value="P:positive regulation of carbohydrate metabolic process"/>
    <property type="evidence" value="ECO:0007669"/>
    <property type="project" value="UniProtKB-UniRule"/>
</dbReference>
<dbReference type="GO" id="GO:0045893">
    <property type="term" value="P:positive regulation of DNA-templated transcription"/>
    <property type="evidence" value="ECO:0007669"/>
    <property type="project" value="UniProtKB-UniRule"/>
</dbReference>
<dbReference type="CDD" id="cd06170">
    <property type="entry name" value="LuxR_C_like"/>
    <property type="match status" value="1"/>
</dbReference>
<dbReference type="FunFam" id="1.10.10.10:FF:000115">
    <property type="entry name" value="HTH-type transcriptional regulator MalT"/>
    <property type="match status" value="1"/>
</dbReference>
<dbReference type="Gene3D" id="1.25.40.10">
    <property type="entry name" value="Tetratricopeptide repeat domain"/>
    <property type="match status" value="1"/>
</dbReference>
<dbReference type="Gene3D" id="1.10.10.10">
    <property type="entry name" value="Winged helix-like DNA-binding domain superfamily/Winged helix DNA-binding domain"/>
    <property type="match status" value="1"/>
</dbReference>
<dbReference type="HAMAP" id="MF_01247">
    <property type="entry name" value="HTH_type_MalT"/>
    <property type="match status" value="1"/>
</dbReference>
<dbReference type="InterPro" id="IPR027417">
    <property type="entry name" value="P-loop_NTPase"/>
</dbReference>
<dbReference type="InterPro" id="IPR016032">
    <property type="entry name" value="Sig_transdc_resp-reg_C-effctor"/>
</dbReference>
<dbReference type="InterPro" id="IPR011990">
    <property type="entry name" value="TPR-like_helical_dom_sf"/>
</dbReference>
<dbReference type="InterPro" id="IPR041617">
    <property type="entry name" value="TPR_MalT"/>
</dbReference>
<dbReference type="InterPro" id="IPR023768">
    <property type="entry name" value="Tscrpt_reg_HTH_MalT"/>
</dbReference>
<dbReference type="InterPro" id="IPR000792">
    <property type="entry name" value="Tscrpt_reg_LuxR_C"/>
</dbReference>
<dbReference type="InterPro" id="IPR036388">
    <property type="entry name" value="WH-like_DNA-bd_sf"/>
</dbReference>
<dbReference type="NCBIfam" id="NF003420">
    <property type="entry name" value="PRK04841.1"/>
    <property type="match status" value="1"/>
</dbReference>
<dbReference type="PANTHER" id="PTHR44688">
    <property type="entry name" value="DNA-BINDING TRANSCRIPTIONAL ACTIVATOR DEVR_DOSR"/>
    <property type="match status" value="1"/>
</dbReference>
<dbReference type="PANTHER" id="PTHR44688:SF16">
    <property type="entry name" value="DNA-BINDING TRANSCRIPTIONAL ACTIVATOR DEVR_DOSR"/>
    <property type="match status" value="1"/>
</dbReference>
<dbReference type="Pfam" id="PF00196">
    <property type="entry name" value="GerE"/>
    <property type="match status" value="1"/>
</dbReference>
<dbReference type="Pfam" id="PF17874">
    <property type="entry name" value="TPR_MalT"/>
    <property type="match status" value="1"/>
</dbReference>
<dbReference type="PRINTS" id="PR00038">
    <property type="entry name" value="HTHLUXR"/>
</dbReference>
<dbReference type="SMART" id="SM00421">
    <property type="entry name" value="HTH_LUXR"/>
    <property type="match status" value="1"/>
</dbReference>
<dbReference type="SUPFAM" id="SSF46894">
    <property type="entry name" value="C-terminal effector domain of the bipartite response regulators"/>
    <property type="match status" value="1"/>
</dbReference>
<dbReference type="SUPFAM" id="SSF52540">
    <property type="entry name" value="P-loop containing nucleoside triphosphate hydrolases"/>
    <property type="match status" value="1"/>
</dbReference>
<dbReference type="SUPFAM" id="SSF48452">
    <property type="entry name" value="TPR-like"/>
    <property type="match status" value="1"/>
</dbReference>
<dbReference type="PROSITE" id="PS00622">
    <property type="entry name" value="HTH_LUXR_1"/>
    <property type="match status" value="1"/>
</dbReference>
<dbReference type="PROSITE" id="PS50043">
    <property type="entry name" value="HTH_LUXR_2"/>
    <property type="match status" value="1"/>
</dbReference>
<evidence type="ECO:0000255" key="1">
    <source>
        <dbReference type="HAMAP-Rule" id="MF_01247"/>
    </source>
</evidence>
<proteinExistence type="inferred from homology"/>
<feature type="chain" id="PRO_0000184173" description="HTH-type transcriptional regulator MalT">
    <location>
        <begin position="1"/>
        <end position="903"/>
    </location>
</feature>
<feature type="domain" description="HTH luxR-type" evidence="1">
    <location>
        <begin position="832"/>
        <end position="897"/>
    </location>
</feature>
<feature type="DNA-binding region" description="H-T-H motif" evidence="1">
    <location>
        <begin position="856"/>
        <end position="875"/>
    </location>
</feature>
<feature type="binding site" evidence="1">
    <location>
        <begin position="39"/>
        <end position="46"/>
    </location>
    <ligand>
        <name>ATP</name>
        <dbReference type="ChEBI" id="CHEBI:30616"/>
    </ligand>
</feature>
<accession>Q8ZJI2</accession>
<accession>Q0WKH7</accession>